<gene>
    <name type="primary">cheY</name>
    <name type="ordered locus">OE_2417R</name>
</gene>
<accession>B0R4K1</accession>
<accession>Q48299</accession>
<accession>Q7LY97</accession>
<protein>
    <recommendedName>
        <fullName>Chemotaxis protein CheY</fullName>
    </recommendedName>
    <alternativeName>
        <fullName>Response regulator CheY</fullName>
    </alternativeName>
</protein>
<organism>
    <name type="scientific">Halobacterium salinarum (strain ATCC 29341 / DSM 671 / R1)</name>
    <dbReference type="NCBI Taxonomy" id="478009"/>
    <lineage>
        <taxon>Archaea</taxon>
        <taxon>Methanobacteriati</taxon>
        <taxon>Methanobacteriota</taxon>
        <taxon>Stenosarchaea group</taxon>
        <taxon>Halobacteria</taxon>
        <taxon>Halobacteriales</taxon>
        <taxon>Halobacteriaceae</taxon>
        <taxon>Halobacterium</taxon>
        <taxon>Halobacterium salinarum NRC-34001</taxon>
    </lineage>
</organism>
<evidence type="ECO:0000250" key="1">
    <source>
        <dbReference type="UniProtKB" id="A0A0H3AMJ9"/>
    </source>
</evidence>
<evidence type="ECO:0000250" key="2">
    <source>
        <dbReference type="UniProtKB" id="P0AE67"/>
    </source>
</evidence>
<evidence type="ECO:0000255" key="3">
    <source>
        <dbReference type="PROSITE-ProRule" id="PRU00169"/>
    </source>
</evidence>
<evidence type="ECO:0000269" key="4">
    <source>
    </source>
</evidence>
<evidence type="ECO:0000269" key="5">
    <source>
    </source>
</evidence>
<evidence type="ECO:0000269" key="6">
    <source>
    </source>
</evidence>
<evidence type="ECO:0000305" key="7"/>
<evidence type="ECO:0000305" key="8">
    <source>
    </source>
</evidence>
<sequence length="120" mass="13436">MAKQVLLVDDSEFMRNLLREILEEEFEIADEAENGVEAVEMYKEYDPDLVMMDIVMPIRDGIEATSEIKEFDAGAHIIMCTSIGQEEKMKKAVKAGADGYITKPFQKPSVMDAISDVLTA</sequence>
<comment type="function">
    <text evidence="5">Involved in the transmission of sensory signals from the chemoreceptors and photoreceptors to the flagellar motors.</text>
</comment>
<comment type="cofactor">
    <cofactor evidence="2">
        <name>Mg(2+)</name>
        <dbReference type="ChEBI" id="CHEBI:18420"/>
    </cofactor>
    <text evidence="2">Binds 1 Mg(2+) ion per subunit.</text>
</comment>
<comment type="subunit">
    <text evidence="4">Interacts with CheA.</text>
</comment>
<comment type="subcellular location">
    <subcellularLocation>
        <location evidence="7">Cytoplasm</location>
    </subcellularLocation>
</comment>
<comment type="PTM">
    <text evidence="5">Phosphorylated by CheA.</text>
</comment>
<comment type="disruption phenotype">
    <text evidence="6">Deletion leads to the loss of both chemotactic and phototactic responses.</text>
</comment>
<dbReference type="EMBL" id="X86407">
    <property type="protein sequence ID" value="CAA60161.1"/>
    <property type="molecule type" value="Genomic_DNA"/>
</dbReference>
<dbReference type="EMBL" id="AM774415">
    <property type="protein sequence ID" value="CAP13666.1"/>
    <property type="molecule type" value="Genomic_DNA"/>
</dbReference>
<dbReference type="PIR" id="G84253">
    <property type="entry name" value="G84253"/>
</dbReference>
<dbReference type="PIR" id="S58645">
    <property type="entry name" value="S58645"/>
</dbReference>
<dbReference type="RefSeq" id="WP_010902692.1">
    <property type="nucleotide sequence ID" value="NC_010364.1"/>
</dbReference>
<dbReference type="SMR" id="B0R4K1"/>
<dbReference type="EnsemblBacteria" id="CAP13666">
    <property type="protein sequence ID" value="CAP13666"/>
    <property type="gene ID" value="OE_2417R"/>
</dbReference>
<dbReference type="GeneID" id="89349365"/>
<dbReference type="KEGG" id="hsl:OE_2417R"/>
<dbReference type="HOGENOM" id="CLU_000445_69_15_2"/>
<dbReference type="PhylomeDB" id="B0R4K1"/>
<dbReference type="Proteomes" id="UP000001321">
    <property type="component" value="Chromosome"/>
</dbReference>
<dbReference type="GO" id="GO:0005737">
    <property type="term" value="C:cytoplasm"/>
    <property type="evidence" value="ECO:0007669"/>
    <property type="project" value="UniProtKB-SubCell"/>
</dbReference>
<dbReference type="GO" id="GO:0046872">
    <property type="term" value="F:metal ion binding"/>
    <property type="evidence" value="ECO:0007669"/>
    <property type="project" value="UniProtKB-KW"/>
</dbReference>
<dbReference type="GO" id="GO:0006935">
    <property type="term" value="P:chemotaxis"/>
    <property type="evidence" value="ECO:0007669"/>
    <property type="project" value="UniProtKB-KW"/>
</dbReference>
<dbReference type="GO" id="GO:0000160">
    <property type="term" value="P:phosphorelay signal transduction system"/>
    <property type="evidence" value="ECO:0007669"/>
    <property type="project" value="UniProtKB-KW"/>
</dbReference>
<dbReference type="CDD" id="cd17542">
    <property type="entry name" value="REC_CheY"/>
    <property type="match status" value="1"/>
</dbReference>
<dbReference type="Gene3D" id="3.40.50.2300">
    <property type="match status" value="1"/>
</dbReference>
<dbReference type="InterPro" id="IPR011006">
    <property type="entry name" value="CheY-like_superfamily"/>
</dbReference>
<dbReference type="InterPro" id="IPR053548">
    <property type="entry name" value="CheY_signal_transducer"/>
</dbReference>
<dbReference type="InterPro" id="IPR001789">
    <property type="entry name" value="Sig_transdc_resp-reg_receiver"/>
</dbReference>
<dbReference type="InterPro" id="IPR052048">
    <property type="entry name" value="ST_Response_Regulator"/>
</dbReference>
<dbReference type="NCBIfam" id="NF041367">
    <property type="entry name" value="CheY_Halo"/>
    <property type="match status" value="1"/>
</dbReference>
<dbReference type="PANTHER" id="PTHR43228">
    <property type="entry name" value="TWO-COMPONENT RESPONSE REGULATOR"/>
    <property type="match status" value="1"/>
</dbReference>
<dbReference type="PANTHER" id="PTHR43228:SF1">
    <property type="entry name" value="TWO-COMPONENT RESPONSE REGULATOR ARR22"/>
    <property type="match status" value="1"/>
</dbReference>
<dbReference type="Pfam" id="PF00072">
    <property type="entry name" value="Response_reg"/>
    <property type="match status" value="1"/>
</dbReference>
<dbReference type="SMART" id="SM00448">
    <property type="entry name" value="REC"/>
    <property type="match status" value="1"/>
</dbReference>
<dbReference type="SUPFAM" id="SSF52172">
    <property type="entry name" value="CheY-like"/>
    <property type="match status" value="1"/>
</dbReference>
<dbReference type="PROSITE" id="PS50110">
    <property type="entry name" value="RESPONSE_REGULATORY"/>
    <property type="match status" value="1"/>
</dbReference>
<name>CHEY_HALS3</name>
<keyword id="KW-0145">Chemotaxis</keyword>
<keyword id="KW-0963">Cytoplasm</keyword>
<keyword id="KW-0903">Direct protein sequencing</keyword>
<keyword id="KW-0460">Magnesium</keyword>
<keyword id="KW-0479">Metal-binding</keyword>
<keyword id="KW-0597">Phosphoprotein</keyword>
<keyword id="KW-0902">Two-component regulatory system</keyword>
<reference key="1">
    <citation type="journal article" date="1995" name="EMBO J.">
        <title>Phosphorylation in halobacterial signal transduction.</title>
        <authorList>
            <person name="Rudolph J."/>
            <person name="Tolliday N."/>
            <person name="Schmitt C."/>
            <person name="Schuster S.C."/>
            <person name="Oesterhelt D."/>
        </authorList>
    </citation>
    <scope>NUCLEOTIDE SEQUENCE [GENOMIC DNA]</scope>
    <scope>PROTEIN SEQUENCE OF 2-6</scope>
    <scope>FUNCTION</scope>
    <scope>PHOSPHORYLATION AT ASP-53 BY CHEA</scope>
    <scope>MUTAGENESIS OF ASP-53</scope>
    <source>
        <strain>R1 / S9 / D2</strain>
    </source>
</reference>
<reference key="2">
    <citation type="journal article" date="2008" name="Genomics">
        <title>Evolution in the laboratory: the genome of Halobacterium salinarum strain R1 compared to that of strain NRC-1.</title>
        <authorList>
            <person name="Pfeiffer F."/>
            <person name="Schuster S.C."/>
            <person name="Broicher A."/>
            <person name="Falb M."/>
            <person name="Palm P."/>
            <person name="Rodewald K."/>
            <person name="Ruepp A."/>
            <person name="Soppa J."/>
            <person name="Tittor J."/>
            <person name="Oesterhelt D."/>
        </authorList>
    </citation>
    <scope>NUCLEOTIDE SEQUENCE [LARGE SCALE GENOMIC DNA]</scope>
    <source>
        <strain>ATCC 29341 / DSM 671 / R1</strain>
    </source>
</reference>
<reference key="3">
    <citation type="journal article" date="1996" name="J. Mol. Biol.">
        <title>Deletion analysis of the che operon in the archaeon Halobacterium salinarium.</title>
        <authorList>
            <person name="Rudolph J."/>
            <person name="Oesterhelt D."/>
        </authorList>
    </citation>
    <scope>DISRUPTION PHENOTYPE</scope>
</reference>
<reference key="4">
    <citation type="journal article" date="2012" name="BMC Microbiol.">
        <title>The protein interaction network of a taxis signal transduction system in a halophilic archaeon.</title>
        <authorList>
            <person name="Schlesner M."/>
            <person name="Miller A."/>
            <person name="Besir H."/>
            <person name="Aivaliotis M."/>
            <person name="Streif J."/>
            <person name="Scheffer B."/>
            <person name="Siedler F."/>
            <person name="Oesterhelt D."/>
        </authorList>
    </citation>
    <scope>INTERACTION WITH CHEA</scope>
    <source>
        <strain>ATCC 29341 / DSM 671 / R1</strain>
    </source>
</reference>
<feature type="initiator methionine" description="Removed" evidence="5">
    <location>
        <position position="1"/>
    </location>
</feature>
<feature type="chain" id="PRO_0000429067" description="Chemotaxis protein CheY">
    <location>
        <begin position="2"/>
        <end position="120"/>
    </location>
</feature>
<feature type="domain" description="Response regulatory" evidence="3">
    <location>
        <begin position="4"/>
        <end position="118"/>
    </location>
</feature>
<feature type="binding site" evidence="1">
    <location>
        <position position="9"/>
    </location>
    <ligand>
        <name>Mg(2+)</name>
        <dbReference type="ChEBI" id="CHEBI:18420"/>
    </ligand>
</feature>
<feature type="binding site" evidence="2">
    <location>
        <position position="10"/>
    </location>
    <ligand>
        <name>Mg(2+)</name>
        <dbReference type="ChEBI" id="CHEBI:18420"/>
    </ligand>
</feature>
<feature type="binding site" evidence="2">
    <location>
        <position position="53"/>
    </location>
    <ligand>
        <name>Mg(2+)</name>
        <dbReference type="ChEBI" id="CHEBI:18420"/>
    </ligand>
</feature>
<feature type="modified residue" description="4-aspartylphosphate" evidence="8">
    <location>
        <position position="53"/>
    </location>
</feature>
<feature type="mutagenesis site" description="Does not accept phosphate group from CheA." evidence="5">
    <original>D</original>
    <variation>A</variation>
    <location>
        <position position="53"/>
    </location>
</feature>
<proteinExistence type="evidence at protein level"/>